<name>Y195_STRT1</name>
<accession>Q5M1N8</accession>
<sequence>MNPMGRKWANIVAKKTAKDGANSKIYAKFGVEIYVAAKQGEPDPESNSALKFVLERAKQAQVPKHVIDKAIDKAKGNTDETFVEGRYEGFGPNGSMIIVDTLTSNVNRTAANVRTAFGKNGGNMGASGSVSYMFDKKGVIVFAGEDADAIFEQLLEADVDVEDVEAEDGSITVYTEPTDLHKALEALRANGQEEFQVTELEMIPQTEVTLEGEDLETFKGLIDALEADDDVQKVYHNVADM</sequence>
<organism>
    <name type="scientific">Streptococcus thermophilus (strain CNRZ 1066)</name>
    <dbReference type="NCBI Taxonomy" id="299768"/>
    <lineage>
        <taxon>Bacteria</taxon>
        <taxon>Bacillati</taxon>
        <taxon>Bacillota</taxon>
        <taxon>Bacilli</taxon>
        <taxon>Lactobacillales</taxon>
        <taxon>Streptococcaceae</taxon>
        <taxon>Streptococcus</taxon>
    </lineage>
</organism>
<keyword id="KW-0963">Cytoplasm</keyword>
<keyword id="KW-0238">DNA-binding</keyword>
<keyword id="KW-0804">Transcription</keyword>
<keyword id="KW-0805">Transcription regulation</keyword>
<dbReference type="EMBL" id="CP000024">
    <property type="protein sequence ID" value="AAV61809.1"/>
    <property type="molecule type" value="Genomic_DNA"/>
</dbReference>
<dbReference type="SMR" id="Q5M1N8"/>
<dbReference type="KEGG" id="stc:str0195"/>
<dbReference type="HOGENOM" id="CLU_062974_2_0_9"/>
<dbReference type="GO" id="GO:0005829">
    <property type="term" value="C:cytosol"/>
    <property type="evidence" value="ECO:0007669"/>
    <property type="project" value="TreeGrafter"/>
</dbReference>
<dbReference type="GO" id="GO:0003677">
    <property type="term" value="F:DNA binding"/>
    <property type="evidence" value="ECO:0007669"/>
    <property type="project" value="UniProtKB-UniRule"/>
</dbReference>
<dbReference type="GO" id="GO:0006355">
    <property type="term" value="P:regulation of DNA-templated transcription"/>
    <property type="evidence" value="ECO:0007669"/>
    <property type="project" value="UniProtKB-UniRule"/>
</dbReference>
<dbReference type="FunFam" id="1.10.10.200:FF:000003">
    <property type="entry name" value="Probable transcriptional regulatory protein YeeN"/>
    <property type="match status" value="1"/>
</dbReference>
<dbReference type="Gene3D" id="1.10.10.200">
    <property type="match status" value="1"/>
</dbReference>
<dbReference type="Gene3D" id="3.30.70.980">
    <property type="match status" value="2"/>
</dbReference>
<dbReference type="HAMAP" id="MF_00693">
    <property type="entry name" value="Transcrip_reg_TACO1"/>
    <property type="match status" value="1"/>
</dbReference>
<dbReference type="HAMAP" id="MF_00918">
    <property type="entry name" value="Transcrip_reg_TACO1_YeeN"/>
    <property type="match status" value="1"/>
</dbReference>
<dbReference type="InterPro" id="IPR017856">
    <property type="entry name" value="Integrase-like_N"/>
</dbReference>
<dbReference type="InterPro" id="IPR048300">
    <property type="entry name" value="TACO1_YebC-like_2nd/3rd_dom"/>
</dbReference>
<dbReference type="InterPro" id="IPR049083">
    <property type="entry name" value="TACO1_YebC_N"/>
</dbReference>
<dbReference type="InterPro" id="IPR002876">
    <property type="entry name" value="Transcrip_reg_TACO1-like"/>
</dbReference>
<dbReference type="InterPro" id="IPR026564">
    <property type="entry name" value="Transcrip_reg_TACO1-like_dom3"/>
</dbReference>
<dbReference type="InterPro" id="IPR026562">
    <property type="entry name" value="Transcrip_reg_TACO1_YeeN"/>
</dbReference>
<dbReference type="InterPro" id="IPR029072">
    <property type="entry name" value="YebC-like"/>
</dbReference>
<dbReference type="NCBIfam" id="NF001030">
    <property type="entry name" value="PRK00110.1"/>
    <property type="match status" value="1"/>
</dbReference>
<dbReference type="NCBIfam" id="NF009044">
    <property type="entry name" value="PRK12378.1"/>
    <property type="match status" value="1"/>
</dbReference>
<dbReference type="NCBIfam" id="TIGR01033">
    <property type="entry name" value="YebC/PmpR family DNA-binding transcriptional regulator"/>
    <property type="match status" value="1"/>
</dbReference>
<dbReference type="PANTHER" id="PTHR12532">
    <property type="entry name" value="TRANSLATIONAL ACTIVATOR OF CYTOCHROME C OXIDASE 1"/>
    <property type="match status" value="1"/>
</dbReference>
<dbReference type="PANTHER" id="PTHR12532:SF0">
    <property type="entry name" value="TRANSLATIONAL ACTIVATOR OF CYTOCHROME C OXIDASE 1"/>
    <property type="match status" value="1"/>
</dbReference>
<dbReference type="Pfam" id="PF20772">
    <property type="entry name" value="TACO1_YebC_N"/>
    <property type="match status" value="1"/>
</dbReference>
<dbReference type="Pfam" id="PF01709">
    <property type="entry name" value="Transcrip_reg"/>
    <property type="match status" value="1"/>
</dbReference>
<dbReference type="SUPFAM" id="SSF75625">
    <property type="entry name" value="YebC-like"/>
    <property type="match status" value="1"/>
</dbReference>
<comment type="subcellular location">
    <subcellularLocation>
        <location evidence="1">Cytoplasm</location>
    </subcellularLocation>
</comment>
<comment type="similarity">
    <text evidence="1">Belongs to the TACO1 family. YeeN subfamily.</text>
</comment>
<feature type="chain" id="PRO_0000175910" description="Probable transcriptional regulatory protein str0195">
    <location>
        <begin position="1"/>
        <end position="241"/>
    </location>
</feature>
<evidence type="ECO:0000255" key="1">
    <source>
        <dbReference type="HAMAP-Rule" id="MF_00918"/>
    </source>
</evidence>
<proteinExistence type="inferred from homology"/>
<protein>
    <recommendedName>
        <fullName evidence="1">Probable transcriptional regulatory protein str0195</fullName>
    </recommendedName>
</protein>
<gene>
    <name type="ordered locus">str0195</name>
</gene>
<reference key="1">
    <citation type="journal article" date="2004" name="Nat. Biotechnol.">
        <title>Complete sequence and comparative genome analysis of the dairy bacterium Streptococcus thermophilus.</title>
        <authorList>
            <person name="Bolotin A."/>
            <person name="Quinquis B."/>
            <person name="Renault P."/>
            <person name="Sorokin A."/>
            <person name="Ehrlich S.D."/>
            <person name="Kulakauskas S."/>
            <person name="Lapidus A."/>
            <person name="Goltsman E."/>
            <person name="Mazur M."/>
            <person name="Pusch G.D."/>
            <person name="Fonstein M."/>
            <person name="Overbeek R."/>
            <person name="Kyprides N."/>
            <person name="Purnelle B."/>
            <person name="Prozzi D."/>
            <person name="Ngui K."/>
            <person name="Masuy D."/>
            <person name="Hancy F."/>
            <person name="Burteau S."/>
            <person name="Boutry M."/>
            <person name="Delcour J."/>
            <person name="Goffeau A."/>
            <person name="Hols P."/>
        </authorList>
    </citation>
    <scope>NUCLEOTIDE SEQUENCE [LARGE SCALE GENOMIC DNA]</scope>
    <source>
        <strain>CNRZ 1066</strain>
    </source>
</reference>